<keyword id="KW-0028">Amino-acid biosynthesis</keyword>
<keyword id="KW-0057">Aromatic amino acid biosynthesis</keyword>
<keyword id="KW-0274">FAD</keyword>
<keyword id="KW-0285">Flavoprotein</keyword>
<keyword id="KW-0288">FMN</keyword>
<keyword id="KW-0456">Lyase</keyword>
<keyword id="KW-0521">NADP</keyword>
<keyword id="KW-1185">Reference proteome</keyword>
<gene>
    <name evidence="1" type="primary">aroC</name>
    <name type="ordered locus">Glov_1590</name>
</gene>
<accession>B3E9N0</accession>
<comment type="function">
    <text evidence="1">Catalyzes the anti-1,4-elimination of the C-3 phosphate and the C-6 proR hydrogen from 5-enolpyruvylshikimate-3-phosphate (EPSP) to yield chorismate, which is the branch point compound that serves as the starting substrate for the three terminal pathways of aromatic amino acid biosynthesis. This reaction introduces a second double bond into the aromatic ring system.</text>
</comment>
<comment type="catalytic activity">
    <reaction evidence="1">
        <text>5-O-(1-carboxyvinyl)-3-phosphoshikimate = chorismate + phosphate</text>
        <dbReference type="Rhea" id="RHEA:21020"/>
        <dbReference type="ChEBI" id="CHEBI:29748"/>
        <dbReference type="ChEBI" id="CHEBI:43474"/>
        <dbReference type="ChEBI" id="CHEBI:57701"/>
        <dbReference type="EC" id="4.2.3.5"/>
    </reaction>
</comment>
<comment type="cofactor">
    <cofactor evidence="1">
        <name>FMNH2</name>
        <dbReference type="ChEBI" id="CHEBI:57618"/>
    </cofactor>
    <text evidence="1">Reduced FMN (FMNH(2)).</text>
</comment>
<comment type="pathway">
    <text evidence="1">Metabolic intermediate biosynthesis; chorismate biosynthesis; chorismate from D-erythrose 4-phosphate and phosphoenolpyruvate: step 7/7.</text>
</comment>
<comment type="subunit">
    <text evidence="1">Homotetramer.</text>
</comment>
<comment type="similarity">
    <text evidence="1">Belongs to the chorismate synthase family.</text>
</comment>
<name>AROC_TRIL1</name>
<proteinExistence type="inferred from homology"/>
<evidence type="ECO:0000255" key="1">
    <source>
        <dbReference type="HAMAP-Rule" id="MF_00300"/>
    </source>
</evidence>
<dbReference type="EC" id="4.2.3.5" evidence="1"/>
<dbReference type="EMBL" id="CP001089">
    <property type="protein sequence ID" value="ACD95306.1"/>
    <property type="molecule type" value="Genomic_DNA"/>
</dbReference>
<dbReference type="RefSeq" id="WP_012469648.1">
    <property type="nucleotide sequence ID" value="NC_010814.1"/>
</dbReference>
<dbReference type="SMR" id="B3E9N0"/>
<dbReference type="STRING" id="398767.Glov_1590"/>
<dbReference type="KEGG" id="glo:Glov_1590"/>
<dbReference type="eggNOG" id="COG0082">
    <property type="taxonomic scope" value="Bacteria"/>
</dbReference>
<dbReference type="HOGENOM" id="CLU_034547_2_0_7"/>
<dbReference type="OrthoDB" id="9771806at2"/>
<dbReference type="UniPathway" id="UPA00053">
    <property type="reaction ID" value="UER00090"/>
</dbReference>
<dbReference type="Proteomes" id="UP000002420">
    <property type="component" value="Chromosome"/>
</dbReference>
<dbReference type="GO" id="GO:0005829">
    <property type="term" value="C:cytosol"/>
    <property type="evidence" value="ECO:0007669"/>
    <property type="project" value="TreeGrafter"/>
</dbReference>
<dbReference type="GO" id="GO:0004107">
    <property type="term" value="F:chorismate synthase activity"/>
    <property type="evidence" value="ECO:0007669"/>
    <property type="project" value="UniProtKB-UniRule"/>
</dbReference>
<dbReference type="GO" id="GO:0010181">
    <property type="term" value="F:FMN binding"/>
    <property type="evidence" value="ECO:0007669"/>
    <property type="project" value="TreeGrafter"/>
</dbReference>
<dbReference type="GO" id="GO:0008652">
    <property type="term" value="P:amino acid biosynthetic process"/>
    <property type="evidence" value="ECO:0007669"/>
    <property type="project" value="UniProtKB-KW"/>
</dbReference>
<dbReference type="GO" id="GO:0009073">
    <property type="term" value="P:aromatic amino acid family biosynthetic process"/>
    <property type="evidence" value="ECO:0007669"/>
    <property type="project" value="UniProtKB-KW"/>
</dbReference>
<dbReference type="GO" id="GO:0009423">
    <property type="term" value="P:chorismate biosynthetic process"/>
    <property type="evidence" value="ECO:0007669"/>
    <property type="project" value="UniProtKB-UniRule"/>
</dbReference>
<dbReference type="CDD" id="cd07304">
    <property type="entry name" value="Chorismate_synthase"/>
    <property type="match status" value="1"/>
</dbReference>
<dbReference type="FunFam" id="3.60.150.10:FF:000002">
    <property type="entry name" value="Chorismate synthase"/>
    <property type="match status" value="1"/>
</dbReference>
<dbReference type="Gene3D" id="3.60.150.10">
    <property type="entry name" value="Chorismate synthase AroC"/>
    <property type="match status" value="1"/>
</dbReference>
<dbReference type="HAMAP" id="MF_00300">
    <property type="entry name" value="Chorismate_synth"/>
    <property type="match status" value="1"/>
</dbReference>
<dbReference type="InterPro" id="IPR000453">
    <property type="entry name" value="Chorismate_synth"/>
</dbReference>
<dbReference type="InterPro" id="IPR035904">
    <property type="entry name" value="Chorismate_synth_AroC_sf"/>
</dbReference>
<dbReference type="InterPro" id="IPR020541">
    <property type="entry name" value="Chorismate_synthase_CS"/>
</dbReference>
<dbReference type="NCBIfam" id="TIGR00033">
    <property type="entry name" value="aroC"/>
    <property type="match status" value="1"/>
</dbReference>
<dbReference type="NCBIfam" id="NF003793">
    <property type="entry name" value="PRK05382.1"/>
    <property type="match status" value="1"/>
</dbReference>
<dbReference type="PANTHER" id="PTHR21085">
    <property type="entry name" value="CHORISMATE SYNTHASE"/>
    <property type="match status" value="1"/>
</dbReference>
<dbReference type="PANTHER" id="PTHR21085:SF0">
    <property type="entry name" value="CHORISMATE SYNTHASE"/>
    <property type="match status" value="1"/>
</dbReference>
<dbReference type="Pfam" id="PF01264">
    <property type="entry name" value="Chorismate_synt"/>
    <property type="match status" value="1"/>
</dbReference>
<dbReference type="PIRSF" id="PIRSF001456">
    <property type="entry name" value="Chorismate_synth"/>
    <property type="match status" value="1"/>
</dbReference>
<dbReference type="SUPFAM" id="SSF103263">
    <property type="entry name" value="Chorismate synthase, AroC"/>
    <property type="match status" value="1"/>
</dbReference>
<dbReference type="PROSITE" id="PS00787">
    <property type="entry name" value="CHORISMATE_SYNTHASE_1"/>
    <property type="match status" value="1"/>
</dbReference>
<dbReference type="PROSITE" id="PS00788">
    <property type="entry name" value="CHORISMATE_SYNTHASE_2"/>
    <property type="match status" value="1"/>
</dbReference>
<sequence length="392" mass="42466">MRYITAGESHGPQLTAIIEGLPAGLEISPEMLDLQLARRQQGYGRGDRMKIERDRADILSGVRWGKTLGSPVTLVVKNRDWENWLEKMSPLAEHEGQAEAVTRPRPGHADLCGAMKYGHRDVRNILERSSARETAVRVAVGAVARGLLHALDIRIGGVVVEVGGVAAKPSAEPYPQQWAQAAASEMFCCDPAAELDMKRLIDHTKSIGDTLGGVVEVQVLGLPPGLGSHVQWDRKLDARLAMALMSIQAIKGVEIGLGFEAARRPGSKVHDEITWNPARLQQGELTPYQRPSNHAGGLEGGMTNGEPLVVRAAMKPIPTLYTPLQSVDIATHEPYEASVERSDTCAVPAALVVAEAVVAIELAQALLEKFGGDSLDEIRRNRDNYLAGLRDF</sequence>
<reference key="1">
    <citation type="submission" date="2008-05" db="EMBL/GenBank/DDBJ databases">
        <title>Complete sequence of chromosome of Geobacter lovleyi SZ.</title>
        <authorList>
            <consortium name="US DOE Joint Genome Institute"/>
            <person name="Lucas S."/>
            <person name="Copeland A."/>
            <person name="Lapidus A."/>
            <person name="Glavina del Rio T."/>
            <person name="Dalin E."/>
            <person name="Tice H."/>
            <person name="Bruce D."/>
            <person name="Goodwin L."/>
            <person name="Pitluck S."/>
            <person name="Chertkov O."/>
            <person name="Meincke L."/>
            <person name="Brettin T."/>
            <person name="Detter J.C."/>
            <person name="Han C."/>
            <person name="Tapia R."/>
            <person name="Kuske C.R."/>
            <person name="Schmutz J."/>
            <person name="Larimer F."/>
            <person name="Land M."/>
            <person name="Hauser L."/>
            <person name="Kyrpides N."/>
            <person name="Mikhailova N."/>
            <person name="Sung Y."/>
            <person name="Fletcher K.E."/>
            <person name="Ritalahti K.M."/>
            <person name="Loeffler F.E."/>
            <person name="Richardson P."/>
        </authorList>
    </citation>
    <scope>NUCLEOTIDE SEQUENCE [LARGE SCALE GENOMIC DNA]</scope>
    <source>
        <strain>ATCC BAA-1151 / DSM 17278 / SZ</strain>
    </source>
</reference>
<feature type="chain" id="PRO_1000132772" description="Chorismate synthase">
    <location>
        <begin position="1"/>
        <end position="392"/>
    </location>
</feature>
<feature type="binding site" evidence="1">
    <location>
        <position position="39"/>
    </location>
    <ligand>
        <name>NADP(+)</name>
        <dbReference type="ChEBI" id="CHEBI:58349"/>
    </ligand>
</feature>
<feature type="binding site" evidence="1">
    <location>
        <position position="45"/>
    </location>
    <ligand>
        <name>NADP(+)</name>
        <dbReference type="ChEBI" id="CHEBI:58349"/>
    </ligand>
</feature>
<feature type="binding site" evidence="1">
    <location>
        <begin position="128"/>
        <end position="130"/>
    </location>
    <ligand>
        <name>FMN</name>
        <dbReference type="ChEBI" id="CHEBI:58210"/>
    </ligand>
</feature>
<feature type="binding site" evidence="1">
    <location>
        <begin position="248"/>
        <end position="249"/>
    </location>
    <ligand>
        <name>FMN</name>
        <dbReference type="ChEBI" id="CHEBI:58210"/>
    </ligand>
</feature>
<feature type="binding site" evidence="1">
    <location>
        <position position="300"/>
    </location>
    <ligand>
        <name>FMN</name>
        <dbReference type="ChEBI" id="CHEBI:58210"/>
    </ligand>
</feature>
<feature type="binding site" evidence="1">
    <location>
        <begin position="315"/>
        <end position="319"/>
    </location>
    <ligand>
        <name>FMN</name>
        <dbReference type="ChEBI" id="CHEBI:58210"/>
    </ligand>
</feature>
<feature type="binding site" evidence="1">
    <location>
        <position position="341"/>
    </location>
    <ligand>
        <name>FMN</name>
        <dbReference type="ChEBI" id="CHEBI:58210"/>
    </ligand>
</feature>
<protein>
    <recommendedName>
        <fullName evidence="1">Chorismate synthase</fullName>
        <shortName evidence="1">CS</shortName>
        <ecNumber evidence="1">4.2.3.5</ecNumber>
    </recommendedName>
    <alternativeName>
        <fullName evidence="1">5-enolpyruvylshikimate-3-phosphate phospholyase</fullName>
    </alternativeName>
</protein>
<organism>
    <name type="scientific">Trichlorobacter lovleyi (strain ATCC BAA-1151 / DSM 17278 / SZ)</name>
    <name type="common">Geobacter lovleyi</name>
    <dbReference type="NCBI Taxonomy" id="398767"/>
    <lineage>
        <taxon>Bacteria</taxon>
        <taxon>Pseudomonadati</taxon>
        <taxon>Thermodesulfobacteriota</taxon>
        <taxon>Desulfuromonadia</taxon>
        <taxon>Geobacterales</taxon>
        <taxon>Geobacteraceae</taxon>
        <taxon>Trichlorobacter</taxon>
    </lineage>
</organism>